<gene>
    <name type="primary">PFN1</name>
</gene>
<organism>
    <name type="scientific">Homo sapiens</name>
    <name type="common">Human</name>
    <dbReference type="NCBI Taxonomy" id="9606"/>
    <lineage>
        <taxon>Eukaryota</taxon>
        <taxon>Metazoa</taxon>
        <taxon>Chordata</taxon>
        <taxon>Craniata</taxon>
        <taxon>Vertebrata</taxon>
        <taxon>Euteleostomi</taxon>
        <taxon>Mammalia</taxon>
        <taxon>Eutheria</taxon>
        <taxon>Euarchontoglires</taxon>
        <taxon>Primates</taxon>
        <taxon>Haplorrhini</taxon>
        <taxon>Catarrhini</taxon>
        <taxon>Hominidae</taxon>
        <taxon>Homo</taxon>
    </lineage>
</organism>
<protein>
    <recommendedName>
        <fullName>Profilin-1</fullName>
    </recommendedName>
    <alternativeName>
        <fullName>Epididymis tissue protein Li 184a</fullName>
    </alternativeName>
    <alternativeName>
        <fullName>Profilin I</fullName>
    </alternativeName>
</protein>
<sequence length="140" mass="15054">MAGWNAYIDNLMADGTCQDAAIVGYKDSPSVWAAVPGKTFVNITPAEVGVLVGKDRSSFYVNGLTLGGQKCSVIRDSLLQDGEFSMDLRTKSTGGAPTFNVTVTKTDKTLVLLMGKEGVHGGLINKKCYEMASHLRRSQY</sequence>
<feature type="initiator methionine" description="Removed" evidence="9 14 17 19">
    <location>
        <position position="1"/>
    </location>
</feature>
<feature type="chain" id="PRO_0000199571" description="Profilin-1">
    <location>
        <begin position="2"/>
        <end position="140"/>
    </location>
</feature>
<feature type="modified residue" description="N-acetylalanine" evidence="9 14 17 19">
    <location>
        <position position="2"/>
    </location>
</feature>
<feature type="modified residue" description="Phosphoserine" evidence="1">
    <location>
        <position position="28"/>
    </location>
</feature>
<feature type="modified residue" description="Phosphoserine" evidence="18">
    <location>
        <position position="57"/>
    </location>
</feature>
<feature type="modified residue" description="Phosphoserine" evidence="16">
    <location>
        <position position="85"/>
    </location>
</feature>
<feature type="modified residue" description="N6-acetyllysine" evidence="15">
    <location>
        <position position="105"/>
    </location>
</feature>
<feature type="modified residue" description="N6-acetyllysine" evidence="15">
    <location>
        <position position="108"/>
    </location>
</feature>
<feature type="modified residue" description="Phosphotyrosine" evidence="13">
    <location>
        <position position="129"/>
    </location>
</feature>
<feature type="modified residue" description="Phosphoserine; by ROCK1" evidence="5">
    <location>
        <position position="138"/>
    </location>
</feature>
<feature type="cross-link" description="Glycyl lysine isopeptide (Lys-Gly) (interchain with G-Cter in SUMO2); alternate" evidence="20">
    <location>
        <position position="54"/>
    </location>
</feature>
<feature type="cross-link" description="Glycyl lysine isopeptide (Lys-Gly) (interchain with G-Cter in ubiquitin); alternate">
    <location>
        <position position="54"/>
    </location>
</feature>
<feature type="sequence variant" id="VAR_068925" description="In ALS18; the mutant protein is detected in the insoluble fraction of cells; dbSNP:rs387907264." evidence="8">
    <original>C</original>
    <variation>G</variation>
    <location>
        <position position="71"/>
    </location>
</feature>
<feature type="sequence variant" id="VAR_068926" description="In ALS18; the mutant protein is detected in the insoluble fraction of cells; dbSNP:rs387907265." evidence="8">
    <original>M</original>
    <variation>T</variation>
    <location>
        <position position="114"/>
    </location>
</feature>
<feature type="sequence variant" id="VAR_068927" description="In ALS18; uncertain significance; like the wild-type the mutant protein is detected in the soluble fraction of cells; dbSNP:rs140547520." evidence="8">
    <original>E</original>
    <variation>G</variation>
    <location>
        <position position="117"/>
    </location>
</feature>
<feature type="sequence variant" id="VAR_068928" description="In ALS18; the mutant protein is detected in the insoluble fraction of cells; dbSNP:rs387907266." evidence="8">
    <original>G</original>
    <variation>V</variation>
    <location>
        <position position="118"/>
    </location>
</feature>
<feature type="helix" evidence="23">
    <location>
        <begin position="5"/>
        <end position="12"/>
    </location>
</feature>
<feature type="strand" evidence="24">
    <location>
        <begin position="13"/>
        <end position="15"/>
    </location>
</feature>
<feature type="strand" evidence="23">
    <location>
        <begin position="17"/>
        <end position="28"/>
    </location>
</feature>
<feature type="strand" evidence="23">
    <location>
        <begin position="30"/>
        <end position="34"/>
    </location>
</feature>
<feature type="helix" evidence="23">
    <location>
        <begin position="40"/>
        <end position="42"/>
    </location>
</feature>
<feature type="helix" evidence="23">
    <location>
        <begin position="45"/>
        <end position="52"/>
    </location>
</feature>
<feature type="helix" evidence="23">
    <location>
        <begin position="58"/>
        <end position="60"/>
    </location>
</feature>
<feature type="strand" evidence="23">
    <location>
        <begin position="64"/>
        <end position="66"/>
    </location>
</feature>
<feature type="strand" evidence="23">
    <location>
        <begin position="69"/>
        <end position="77"/>
    </location>
</feature>
<feature type="strand" evidence="22">
    <location>
        <begin position="78"/>
        <end position="80"/>
    </location>
</feature>
<feature type="turn" evidence="23">
    <location>
        <begin position="81"/>
        <end position="83"/>
    </location>
</feature>
<feature type="strand" evidence="23">
    <location>
        <begin position="85"/>
        <end position="90"/>
    </location>
</feature>
<feature type="strand" evidence="21">
    <location>
        <begin position="93"/>
        <end position="96"/>
    </location>
</feature>
<feature type="strand" evidence="23">
    <location>
        <begin position="100"/>
        <end position="105"/>
    </location>
</feature>
<feature type="strand" evidence="23">
    <location>
        <begin position="107"/>
        <end position="115"/>
    </location>
</feature>
<feature type="helix" evidence="23">
    <location>
        <begin position="121"/>
        <end position="137"/>
    </location>
</feature>
<name>PROF1_HUMAN</name>
<keyword id="KW-0002">3D-structure</keyword>
<keyword id="KW-0007">Acetylation</keyword>
<keyword id="KW-0009">Actin-binding</keyword>
<keyword id="KW-0036">Amyotrophic lateral sclerosis</keyword>
<keyword id="KW-0963">Cytoplasm</keyword>
<keyword id="KW-0206">Cytoskeleton</keyword>
<keyword id="KW-0903">Direct protein sequencing</keyword>
<keyword id="KW-0225">Disease variant</keyword>
<keyword id="KW-1017">Isopeptide bond</keyword>
<keyword id="KW-0523">Neurodegeneration</keyword>
<keyword id="KW-0597">Phosphoprotein</keyword>
<keyword id="KW-1267">Proteomics identification</keyword>
<keyword id="KW-1185">Reference proteome</keyword>
<keyword id="KW-0832">Ubl conjugation</keyword>
<dbReference type="EMBL" id="J03191">
    <property type="protein sequence ID" value="AAA36486.1"/>
    <property type="molecule type" value="mRNA"/>
</dbReference>
<dbReference type="EMBL" id="GU727630">
    <property type="protein sequence ID" value="ADU87632.1"/>
    <property type="molecule type" value="mRNA"/>
</dbReference>
<dbReference type="EMBL" id="BT007001">
    <property type="protein sequence ID" value="AAP35647.1"/>
    <property type="molecule type" value="mRNA"/>
</dbReference>
<dbReference type="EMBL" id="AK312168">
    <property type="protein sequence ID" value="BAG35102.1"/>
    <property type="molecule type" value="mRNA"/>
</dbReference>
<dbReference type="EMBL" id="CR407670">
    <property type="protein sequence ID" value="CAG28598.1"/>
    <property type="molecule type" value="mRNA"/>
</dbReference>
<dbReference type="EMBL" id="CH471108">
    <property type="protein sequence ID" value="EAW90381.1"/>
    <property type="molecule type" value="Genomic_DNA"/>
</dbReference>
<dbReference type="EMBL" id="CH471108">
    <property type="protein sequence ID" value="EAW90383.1"/>
    <property type="molecule type" value="Genomic_DNA"/>
</dbReference>
<dbReference type="EMBL" id="CH471108">
    <property type="protein sequence ID" value="EAW90384.1"/>
    <property type="molecule type" value="Genomic_DNA"/>
</dbReference>
<dbReference type="EMBL" id="BC002475">
    <property type="protein sequence ID" value="AAH02475.1"/>
    <property type="molecule type" value="mRNA"/>
</dbReference>
<dbReference type="EMBL" id="BC006768">
    <property type="protein sequence ID" value="AAH06768.1"/>
    <property type="molecule type" value="mRNA"/>
</dbReference>
<dbReference type="EMBL" id="BC013439">
    <property type="protein sequence ID" value="AAH13439.1"/>
    <property type="molecule type" value="mRNA"/>
</dbReference>
<dbReference type="EMBL" id="BC015164">
    <property type="protein sequence ID" value="AAH15164.1"/>
    <property type="molecule type" value="mRNA"/>
</dbReference>
<dbReference type="EMBL" id="BC057828">
    <property type="protein sequence ID" value="AAH57828.1"/>
    <property type="molecule type" value="mRNA"/>
</dbReference>
<dbReference type="CCDS" id="CCDS11061.1"/>
<dbReference type="PIR" id="A28622">
    <property type="entry name" value="A28622"/>
</dbReference>
<dbReference type="RefSeq" id="NP_005013.1">
    <property type="nucleotide sequence ID" value="NM_005022.4"/>
</dbReference>
<dbReference type="PDB" id="1AWI">
    <property type="method" value="X-ray"/>
    <property type="resolution" value="2.20 A"/>
    <property type="chains" value="A/B=3-140"/>
</dbReference>
<dbReference type="PDB" id="1CF0">
    <property type="method" value="X-ray"/>
    <property type="resolution" value="2.20 A"/>
    <property type="chains" value="A/B=3-140"/>
</dbReference>
<dbReference type="PDB" id="1CJF">
    <property type="method" value="X-ray"/>
    <property type="resolution" value="2.30 A"/>
    <property type="chains" value="A/B=2-140"/>
</dbReference>
<dbReference type="PDB" id="1FIK">
    <property type="method" value="X-ray"/>
    <property type="resolution" value="2.30 A"/>
    <property type="chains" value="A=2-140"/>
</dbReference>
<dbReference type="PDB" id="1FIL">
    <property type="method" value="X-ray"/>
    <property type="resolution" value="2.00 A"/>
    <property type="chains" value="A=2-140"/>
</dbReference>
<dbReference type="PDB" id="1PFL">
    <property type="method" value="NMR"/>
    <property type="chains" value="A=2-140"/>
</dbReference>
<dbReference type="PDB" id="2PAV">
    <property type="method" value="X-ray"/>
    <property type="resolution" value="1.80 A"/>
    <property type="chains" value="P=2-140"/>
</dbReference>
<dbReference type="PDB" id="2PBD">
    <property type="method" value="X-ray"/>
    <property type="resolution" value="1.50 A"/>
    <property type="chains" value="P=2-140"/>
</dbReference>
<dbReference type="PDB" id="3CHW">
    <property type="method" value="X-ray"/>
    <property type="resolution" value="2.30 A"/>
    <property type="chains" value="P=2-140"/>
</dbReference>
<dbReference type="PDB" id="4X1L">
    <property type="method" value="X-ray"/>
    <property type="resolution" value="2.16 A"/>
    <property type="chains" value="A=1-140"/>
</dbReference>
<dbReference type="PDB" id="4X1M">
    <property type="method" value="X-ray"/>
    <property type="resolution" value="2.17 A"/>
    <property type="chains" value="A=1-140"/>
</dbReference>
<dbReference type="PDB" id="4X25">
    <property type="method" value="X-ray"/>
    <property type="resolution" value="2.23 A"/>
    <property type="chains" value="A/B=1-140"/>
</dbReference>
<dbReference type="PDB" id="6NAS">
    <property type="method" value="X-ray"/>
    <property type="resolution" value="2.90 A"/>
    <property type="chains" value="P=1-140"/>
</dbReference>
<dbReference type="PDB" id="6NBE">
    <property type="method" value="X-ray"/>
    <property type="resolution" value="2.00 A"/>
    <property type="chains" value="P=1-140"/>
</dbReference>
<dbReference type="PDB" id="6NBW">
    <property type="method" value="X-ray"/>
    <property type="resolution" value="2.50 A"/>
    <property type="chains" value="P=1-140"/>
</dbReference>
<dbReference type="PDB" id="7P1H">
    <property type="method" value="EM"/>
    <property type="resolution" value="3.90 A"/>
    <property type="chains" value="P=1-140"/>
</dbReference>
<dbReference type="PDB" id="8BJH">
    <property type="method" value="X-ray"/>
    <property type="resolution" value="1.69 A"/>
    <property type="chains" value="B=2-140"/>
</dbReference>
<dbReference type="PDB" id="8BJI">
    <property type="method" value="X-ray"/>
    <property type="resolution" value="1.75 A"/>
    <property type="chains" value="B=2-140"/>
</dbReference>
<dbReference type="PDB" id="8BJJ">
    <property type="method" value="X-ray"/>
    <property type="resolution" value="1.70 A"/>
    <property type="chains" value="C=2-140"/>
</dbReference>
<dbReference type="PDB" id="8BR0">
    <property type="method" value="X-ray"/>
    <property type="resolution" value="2.22 A"/>
    <property type="chains" value="B/D=2-140"/>
</dbReference>
<dbReference type="PDB" id="8RTY">
    <property type="method" value="EM"/>
    <property type="resolution" value="6.25 A"/>
    <property type="chains" value="P=2-140"/>
</dbReference>
<dbReference type="PDB" id="9AZP">
    <property type="method" value="EM"/>
    <property type="resolution" value="3.79 A"/>
    <property type="chains" value="J=2-140"/>
</dbReference>
<dbReference type="PDBsum" id="1AWI"/>
<dbReference type="PDBsum" id="1CF0"/>
<dbReference type="PDBsum" id="1CJF"/>
<dbReference type="PDBsum" id="1FIK"/>
<dbReference type="PDBsum" id="1FIL"/>
<dbReference type="PDBsum" id="1PFL"/>
<dbReference type="PDBsum" id="2PAV"/>
<dbReference type="PDBsum" id="2PBD"/>
<dbReference type="PDBsum" id="3CHW"/>
<dbReference type="PDBsum" id="4X1L"/>
<dbReference type="PDBsum" id="4X1M"/>
<dbReference type="PDBsum" id="4X25"/>
<dbReference type="PDBsum" id="6NAS"/>
<dbReference type="PDBsum" id="6NBE"/>
<dbReference type="PDBsum" id="6NBW"/>
<dbReference type="PDBsum" id="7P1H"/>
<dbReference type="PDBsum" id="8BJH"/>
<dbReference type="PDBsum" id="8BJI"/>
<dbReference type="PDBsum" id="8BJJ"/>
<dbReference type="PDBsum" id="8BR0"/>
<dbReference type="PDBsum" id="8RTY"/>
<dbReference type="PDBsum" id="9AZP"/>
<dbReference type="BMRB" id="P07737"/>
<dbReference type="EMDB" id="EMD-13159"/>
<dbReference type="EMDB" id="EMD-19499"/>
<dbReference type="EMDB" id="EMD-44018"/>
<dbReference type="SMR" id="P07737"/>
<dbReference type="BioGRID" id="111237">
    <property type="interactions" value="515"/>
</dbReference>
<dbReference type="CORUM" id="P07737"/>
<dbReference type="DIP" id="DIP-30N"/>
<dbReference type="FunCoup" id="P07737">
    <property type="interactions" value="1237"/>
</dbReference>
<dbReference type="IntAct" id="P07737">
    <property type="interactions" value="116"/>
</dbReference>
<dbReference type="MINT" id="P07737"/>
<dbReference type="STRING" id="9606.ENSP00000225655"/>
<dbReference type="DrugBank" id="DB07908">
    <property type="generic name" value="7-HYDROXY-4-METHYL-3-(2-HYDROXY-ETHYL)COUMARIN"/>
</dbReference>
<dbReference type="DrugBank" id="DB11638">
    <property type="generic name" value="Artenimol"/>
</dbReference>
<dbReference type="Allergome" id="907">
    <property type="allergen name" value="Hom s Profilin"/>
</dbReference>
<dbReference type="GlyGen" id="P07737">
    <property type="glycosylation" value="3 sites, 2 N-linked glycans (2 sites), 1 O-linked glycan (1 site)"/>
</dbReference>
<dbReference type="iPTMnet" id="P07737"/>
<dbReference type="MetOSite" id="P07737"/>
<dbReference type="PhosphoSitePlus" id="P07737"/>
<dbReference type="SwissPalm" id="P07737"/>
<dbReference type="BioMuta" id="PFN1"/>
<dbReference type="DMDM" id="130979"/>
<dbReference type="OGP" id="P07737"/>
<dbReference type="REPRODUCTION-2DPAGE" id="IPI00216691"/>
<dbReference type="CPTAC" id="CPTAC-253"/>
<dbReference type="CPTAC" id="CPTAC-254"/>
<dbReference type="jPOST" id="P07737"/>
<dbReference type="MassIVE" id="P07737"/>
<dbReference type="PaxDb" id="9606-ENSP00000225655"/>
<dbReference type="PeptideAtlas" id="P07737"/>
<dbReference type="PRIDE" id="P07737"/>
<dbReference type="ProteomicsDB" id="52024"/>
<dbReference type="Pumba" id="P07737"/>
<dbReference type="TopDownProteomics" id="P07737"/>
<dbReference type="Antibodypedia" id="23487">
    <property type="antibodies" value="454 antibodies from 35 providers"/>
</dbReference>
<dbReference type="DNASU" id="5216"/>
<dbReference type="YCharOS" id="P07737">
    <property type="antibodies" value="Tested 15 antibodies from 9 manufacturers"/>
</dbReference>
<dbReference type="Ensembl" id="ENST00000225655.6">
    <property type="protein sequence ID" value="ENSP00000225655.5"/>
    <property type="gene ID" value="ENSG00000108518.8"/>
</dbReference>
<dbReference type="GeneID" id="5216"/>
<dbReference type="KEGG" id="hsa:5216"/>
<dbReference type="MANE-Select" id="ENST00000225655.6">
    <property type="protein sequence ID" value="ENSP00000225655.5"/>
    <property type="RefSeq nucleotide sequence ID" value="NM_005022.4"/>
    <property type="RefSeq protein sequence ID" value="NP_005013.1"/>
</dbReference>
<dbReference type="UCSC" id="uc002gaa.5">
    <property type="organism name" value="human"/>
</dbReference>
<dbReference type="AGR" id="HGNC:8881"/>
<dbReference type="CTD" id="5216"/>
<dbReference type="DisGeNET" id="5216"/>
<dbReference type="GeneCards" id="PFN1"/>
<dbReference type="HGNC" id="HGNC:8881">
    <property type="gene designation" value="PFN1"/>
</dbReference>
<dbReference type="HPA" id="ENSG00000108518">
    <property type="expression patterns" value="Low tissue specificity"/>
</dbReference>
<dbReference type="MalaCards" id="PFN1"/>
<dbReference type="MIM" id="176610">
    <property type="type" value="gene"/>
</dbReference>
<dbReference type="MIM" id="614808">
    <property type="type" value="phenotype"/>
</dbReference>
<dbReference type="neXtProt" id="NX_P07737"/>
<dbReference type="OpenTargets" id="ENSG00000108518"/>
<dbReference type="Orphanet" id="803">
    <property type="disease" value="Amyotrophic lateral sclerosis"/>
</dbReference>
<dbReference type="PharmGKB" id="PA33219"/>
<dbReference type="VEuPathDB" id="HostDB:ENSG00000108518"/>
<dbReference type="eggNOG" id="KOG1755">
    <property type="taxonomic scope" value="Eukaryota"/>
</dbReference>
<dbReference type="GeneTree" id="ENSGT00940000153664"/>
<dbReference type="HOGENOM" id="CLU_123405_1_0_1"/>
<dbReference type="InParanoid" id="P07737"/>
<dbReference type="OMA" id="NIAVCMT"/>
<dbReference type="OrthoDB" id="9485603at2759"/>
<dbReference type="PAN-GO" id="P07737">
    <property type="GO annotations" value="4 GO annotations based on evolutionary models"/>
</dbReference>
<dbReference type="PhylomeDB" id="P07737"/>
<dbReference type="TreeFam" id="TF331744"/>
<dbReference type="PathwayCommons" id="P07737"/>
<dbReference type="Reactome" id="R-HSA-114608">
    <property type="pathway name" value="Platelet degranulation"/>
</dbReference>
<dbReference type="Reactome" id="R-HSA-376176">
    <property type="pathway name" value="Signaling by ROBO receptors"/>
</dbReference>
<dbReference type="Reactome" id="R-HSA-4086400">
    <property type="pathway name" value="PCP/CE pathway"/>
</dbReference>
<dbReference type="Reactome" id="R-HSA-5663220">
    <property type="pathway name" value="RHO GTPases Activate Formins"/>
</dbReference>
<dbReference type="SignaLink" id="P07737"/>
<dbReference type="SIGNOR" id="P07737"/>
<dbReference type="BioGRID-ORCS" id="5216">
    <property type="hits" value="617 hits in 1177 CRISPR screens"/>
</dbReference>
<dbReference type="CD-CODE" id="91857CE7">
    <property type="entry name" value="Nucleolus"/>
</dbReference>
<dbReference type="CD-CODE" id="9B5E283A">
    <property type="entry name" value="Synthetic Condensate 000373"/>
</dbReference>
<dbReference type="CD-CODE" id="DEE660B4">
    <property type="entry name" value="Stress granule"/>
</dbReference>
<dbReference type="CD-CODE" id="FB4E32DD">
    <property type="entry name" value="Presynaptic clusters and postsynaptic densities"/>
</dbReference>
<dbReference type="ChiTaRS" id="PFN1">
    <property type="organism name" value="human"/>
</dbReference>
<dbReference type="EvolutionaryTrace" id="P07737"/>
<dbReference type="GeneWiki" id="Profilin_1"/>
<dbReference type="GenomeRNAi" id="5216"/>
<dbReference type="Pharos" id="P07737">
    <property type="development level" value="Tbio"/>
</dbReference>
<dbReference type="PRO" id="PR:P07737"/>
<dbReference type="Proteomes" id="UP000005640">
    <property type="component" value="Chromosome 17"/>
</dbReference>
<dbReference type="RNAct" id="P07737">
    <property type="molecule type" value="protein"/>
</dbReference>
<dbReference type="Bgee" id="ENSG00000108518">
    <property type="expression patterns" value="Expressed in granulocyte and 209 other cell types or tissues"/>
</dbReference>
<dbReference type="ExpressionAtlas" id="P07737">
    <property type="expression patterns" value="baseline and differential"/>
</dbReference>
<dbReference type="GO" id="GO:0072562">
    <property type="term" value="C:blood microparticle"/>
    <property type="evidence" value="ECO:0007005"/>
    <property type="project" value="UniProtKB"/>
</dbReference>
<dbReference type="GO" id="GO:0005938">
    <property type="term" value="C:cell cortex"/>
    <property type="evidence" value="ECO:0000314"/>
    <property type="project" value="UniProtKB"/>
</dbReference>
<dbReference type="GO" id="GO:0005737">
    <property type="term" value="C:cytoplasm"/>
    <property type="evidence" value="ECO:0000314"/>
    <property type="project" value="UniProtKB"/>
</dbReference>
<dbReference type="GO" id="GO:0005856">
    <property type="term" value="C:cytoskeleton"/>
    <property type="evidence" value="ECO:0007669"/>
    <property type="project" value="UniProtKB-SubCell"/>
</dbReference>
<dbReference type="GO" id="GO:0005829">
    <property type="term" value="C:cytosol"/>
    <property type="evidence" value="ECO:0000304"/>
    <property type="project" value="Reactome"/>
</dbReference>
<dbReference type="GO" id="GO:0070062">
    <property type="term" value="C:extracellular exosome"/>
    <property type="evidence" value="ECO:0007005"/>
    <property type="project" value="UniProtKB"/>
</dbReference>
<dbReference type="GO" id="GO:0005925">
    <property type="term" value="C:focal adhesion"/>
    <property type="evidence" value="ECO:0007005"/>
    <property type="project" value="UniProtKB"/>
</dbReference>
<dbReference type="GO" id="GO:0098978">
    <property type="term" value="C:glutamatergic synapse"/>
    <property type="evidence" value="ECO:0007669"/>
    <property type="project" value="Ensembl"/>
</dbReference>
<dbReference type="GO" id="GO:0016020">
    <property type="term" value="C:membrane"/>
    <property type="evidence" value="ECO:0007005"/>
    <property type="project" value="UniProtKB"/>
</dbReference>
<dbReference type="GO" id="GO:0005634">
    <property type="term" value="C:nucleus"/>
    <property type="evidence" value="ECO:0000314"/>
    <property type="project" value="UniProtKB"/>
</dbReference>
<dbReference type="GO" id="GO:0003779">
    <property type="term" value="F:actin binding"/>
    <property type="evidence" value="ECO:0000353"/>
    <property type="project" value="UniProtKB"/>
</dbReference>
<dbReference type="GO" id="GO:0003785">
    <property type="term" value="F:actin monomer binding"/>
    <property type="evidence" value="ECO:0000314"/>
    <property type="project" value="UniProtKB"/>
</dbReference>
<dbReference type="GO" id="GO:0000774">
    <property type="term" value="F:adenyl-nucleotide exchange factor activity"/>
    <property type="evidence" value="ECO:0000314"/>
    <property type="project" value="UniProtKB"/>
</dbReference>
<dbReference type="GO" id="GO:0045296">
    <property type="term" value="F:cadherin binding"/>
    <property type="evidence" value="ECO:0007005"/>
    <property type="project" value="BHF-UCL"/>
</dbReference>
<dbReference type="GO" id="GO:0005546">
    <property type="term" value="F:phosphatidylinositol-4,5-bisphosphate binding"/>
    <property type="evidence" value="ECO:0000314"/>
    <property type="project" value="UniProtKB"/>
</dbReference>
<dbReference type="GO" id="GO:0001784">
    <property type="term" value="F:phosphotyrosine residue binding"/>
    <property type="evidence" value="ECO:0000353"/>
    <property type="project" value="UniProtKB"/>
</dbReference>
<dbReference type="GO" id="GO:0070064">
    <property type="term" value="F:proline-rich region binding"/>
    <property type="evidence" value="ECO:0000353"/>
    <property type="project" value="UniProtKB"/>
</dbReference>
<dbReference type="GO" id="GO:0003723">
    <property type="term" value="F:RNA binding"/>
    <property type="evidence" value="ECO:0007005"/>
    <property type="project" value="UniProtKB"/>
</dbReference>
<dbReference type="GO" id="GO:0031267">
    <property type="term" value="F:small GTPase binding"/>
    <property type="evidence" value="ECO:0007669"/>
    <property type="project" value="Ensembl"/>
</dbReference>
<dbReference type="GO" id="GO:0030036">
    <property type="term" value="P:actin cytoskeleton organization"/>
    <property type="evidence" value="ECO:0007669"/>
    <property type="project" value="InterPro"/>
</dbReference>
<dbReference type="GO" id="GO:0098885">
    <property type="term" value="P:modification of postsynaptic actin cytoskeleton"/>
    <property type="evidence" value="ECO:0007669"/>
    <property type="project" value="Ensembl"/>
</dbReference>
<dbReference type="GO" id="GO:0050804">
    <property type="term" value="P:modulation of chemical synaptic transmission"/>
    <property type="evidence" value="ECO:0007669"/>
    <property type="project" value="Ensembl"/>
</dbReference>
<dbReference type="GO" id="GO:0032232">
    <property type="term" value="P:negative regulation of actin filament bundle assembly"/>
    <property type="evidence" value="ECO:0000315"/>
    <property type="project" value="UniProtKB"/>
</dbReference>
<dbReference type="GO" id="GO:0030837">
    <property type="term" value="P:negative regulation of actin filament polymerization"/>
    <property type="evidence" value="ECO:0000314"/>
    <property type="project" value="UniProtKB"/>
</dbReference>
<dbReference type="GO" id="GO:0051497">
    <property type="term" value="P:negative regulation of stress fiber assembly"/>
    <property type="evidence" value="ECO:0000315"/>
    <property type="project" value="UniProtKB"/>
</dbReference>
<dbReference type="GO" id="GO:0001843">
    <property type="term" value="P:neural tube closure"/>
    <property type="evidence" value="ECO:0007669"/>
    <property type="project" value="Ensembl"/>
</dbReference>
<dbReference type="GO" id="GO:0032233">
    <property type="term" value="P:positive regulation of actin filament bundle assembly"/>
    <property type="evidence" value="ECO:0000318"/>
    <property type="project" value="GO_Central"/>
</dbReference>
<dbReference type="GO" id="GO:0030838">
    <property type="term" value="P:positive regulation of actin filament polymerization"/>
    <property type="evidence" value="ECO:0000316"/>
    <property type="project" value="UniProtKB"/>
</dbReference>
<dbReference type="GO" id="GO:0032781">
    <property type="term" value="P:positive regulation of ATP-dependent activity"/>
    <property type="evidence" value="ECO:0000314"/>
    <property type="project" value="UniProtKB"/>
</dbReference>
<dbReference type="GO" id="GO:0010634">
    <property type="term" value="P:positive regulation of epithelial cell migration"/>
    <property type="evidence" value="ECO:0000315"/>
    <property type="project" value="UniProtKB"/>
</dbReference>
<dbReference type="GO" id="GO:1900029">
    <property type="term" value="P:positive regulation of ruffle assembly"/>
    <property type="evidence" value="ECO:0000315"/>
    <property type="project" value="UniProtKB"/>
</dbReference>
<dbReference type="GO" id="GO:0050821">
    <property type="term" value="P:protein stabilization"/>
    <property type="evidence" value="ECO:0000314"/>
    <property type="project" value="UniProtKB"/>
</dbReference>
<dbReference type="GO" id="GO:0030833">
    <property type="term" value="P:regulation of actin filament polymerization"/>
    <property type="evidence" value="ECO:0000318"/>
    <property type="project" value="GO_Central"/>
</dbReference>
<dbReference type="GO" id="GO:0006357">
    <property type="term" value="P:regulation of transcription by RNA polymerase II"/>
    <property type="evidence" value="ECO:0007669"/>
    <property type="project" value="Ensembl"/>
</dbReference>
<dbReference type="GO" id="GO:0060074">
    <property type="term" value="P:synapse maturation"/>
    <property type="evidence" value="ECO:0007669"/>
    <property type="project" value="Ensembl"/>
</dbReference>
<dbReference type="CDD" id="cd00148">
    <property type="entry name" value="PROF"/>
    <property type="match status" value="1"/>
</dbReference>
<dbReference type="FunFam" id="3.30.450.30:FF:000008">
    <property type="entry name" value="Profilin"/>
    <property type="match status" value="1"/>
</dbReference>
<dbReference type="Gene3D" id="3.30.450.30">
    <property type="entry name" value="Dynein light chain 2a, cytoplasmic"/>
    <property type="match status" value="1"/>
</dbReference>
<dbReference type="InterPro" id="IPR048278">
    <property type="entry name" value="PFN"/>
</dbReference>
<dbReference type="InterPro" id="IPR005455">
    <property type="entry name" value="PFN_euk"/>
</dbReference>
<dbReference type="InterPro" id="IPR036140">
    <property type="entry name" value="PFN_sf"/>
</dbReference>
<dbReference type="InterPro" id="IPR005454">
    <property type="entry name" value="Profilin1/2/3_vertebrate"/>
</dbReference>
<dbReference type="InterPro" id="IPR027310">
    <property type="entry name" value="Profilin_CS"/>
</dbReference>
<dbReference type="PANTHER" id="PTHR13936">
    <property type="entry name" value="PROFILIN"/>
    <property type="match status" value="1"/>
</dbReference>
<dbReference type="PANTHER" id="PTHR13936:SF14">
    <property type="entry name" value="PROFILIN-1"/>
    <property type="match status" value="1"/>
</dbReference>
<dbReference type="Pfam" id="PF00235">
    <property type="entry name" value="Profilin"/>
    <property type="match status" value="1"/>
</dbReference>
<dbReference type="PRINTS" id="PR01639">
    <property type="entry name" value="PROFILINMAML"/>
</dbReference>
<dbReference type="SMART" id="SM00392">
    <property type="entry name" value="PROF"/>
    <property type="match status" value="1"/>
</dbReference>
<dbReference type="SUPFAM" id="SSF55770">
    <property type="entry name" value="Profilin (actin-binding protein)"/>
    <property type="match status" value="1"/>
</dbReference>
<dbReference type="PROSITE" id="PS00414">
    <property type="entry name" value="PROFILIN"/>
    <property type="match status" value="1"/>
</dbReference>
<evidence type="ECO:0000250" key="1">
    <source>
        <dbReference type="UniProtKB" id="P62963"/>
    </source>
</evidence>
<evidence type="ECO:0000269" key="2">
    <source>
    </source>
</evidence>
<evidence type="ECO:0000269" key="3">
    <source>
    </source>
</evidence>
<evidence type="ECO:0000269" key="4">
    <source>
    </source>
</evidence>
<evidence type="ECO:0000269" key="5">
    <source>
    </source>
</evidence>
<evidence type="ECO:0000269" key="6">
    <source>
    </source>
</evidence>
<evidence type="ECO:0000269" key="7">
    <source>
    </source>
</evidence>
<evidence type="ECO:0000269" key="8">
    <source>
    </source>
</evidence>
<evidence type="ECO:0000269" key="9">
    <source>
    </source>
</evidence>
<evidence type="ECO:0000269" key="10">
    <source>
    </source>
</evidence>
<evidence type="ECO:0000269" key="11">
    <source>
    </source>
</evidence>
<evidence type="ECO:0000305" key="12"/>
<evidence type="ECO:0007744" key="13">
    <source>
    </source>
</evidence>
<evidence type="ECO:0007744" key="14">
    <source>
    </source>
</evidence>
<evidence type="ECO:0007744" key="15">
    <source>
    </source>
</evidence>
<evidence type="ECO:0007744" key="16">
    <source>
    </source>
</evidence>
<evidence type="ECO:0007744" key="17">
    <source>
    </source>
</evidence>
<evidence type="ECO:0007744" key="18">
    <source>
    </source>
</evidence>
<evidence type="ECO:0007744" key="19">
    <source>
    </source>
</evidence>
<evidence type="ECO:0007744" key="20">
    <source>
    </source>
</evidence>
<evidence type="ECO:0007829" key="21">
    <source>
        <dbReference type="PDB" id="1AWI"/>
    </source>
</evidence>
<evidence type="ECO:0007829" key="22">
    <source>
        <dbReference type="PDB" id="1FIL"/>
    </source>
</evidence>
<evidence type="ECO:0007829" key="23">
    <source>
        <dbReference type="PDB" id="2PBD"/>
    </source>
</evidence>
<evidence type="ECO:0007829" key="24">
    <source>
        <dbReference type="PDB" id="4X1L"/>
    </source>
</evidence>
<reference key="1">
    <citation type="journal article" date="1988" name="J. Biol. Chem.">
        <title>Human profilin. Molecular cloning, sequence comparison, and chromosomal analysis.</title>
        <authorList>
            <person name="Kwiatkowski D.J."/>
            <person name="Bruns G.A.P."/>
        </authorList>
    </citation>
    <scope>NUCLEOTIDE SEQUENCE [MRNA]</scope>
</reference>
<reference key="2">
    <citation type="journal article" date="2010" name="Mol. Cell. Proteomics">
        <title>Systematic mapping and functional analysis of a family of human epididymal secretory sperm-located proteins.</title>
        <authorList>
            <person name="Li J."/>
            <person name="Liu F."/>
            <person name="Wang H."/>
            <person name="Liu X."/>
            <person name="Liu J."/>
            <person name="Li N."/>
            <person name="Wan F."/>
            <person name="Wang W."/>
            <person name="Zhang C."/>
            <person name="Jin S."/>
            <person name="Liu J."/>
            <person name="Zhu P."/>
            <person name="Liu Y."/>
        </authorList>
    </citation>
    <scope>NUCLEOTIDE SEQUENCE [MRNA]</scope>
    <scope>TISSUE SPECIFICITY</scope>
    <source>
        <tissue>Epididymis</tissue>
    </source>
</reference>
<reference key="3">
    <citation type="submission" date="2003-05" db="EMBL/GenBank/DDBJ databases">
        <title>Cloning of human full-length CDSs in BD Creator(TM) system donor vector.</title>
        <authorList>
            <person name="Kalnine N."/>
            <person name="Chen X."/>
            <person name="Rolfs A."/>
            <person name="Halleck A."/>
            <person name="Hines L."/>
            <person name="Eisenstein S."/>
            <person name="Koundinya M."/>
            <person name="Raphael J."/>
            <person name="Moreira D."/>
            <person name="Kelley T."/>
            <person name="LaBaer J."/>
            <person name="Lin Y."/>
            <person name="Phelan M."/>
            <person name="Farmer A."/>
        </authorList>
    </citation>
    <scope>NUCLEOTIDE SEQUENCE [LARGE SCALE MRNA]</scope>
</reference>
<reference key="4">
    <citation type="journal article" date="2004" name="Nat. Genet.">
        <title>Complete sequencing and characterization of 21,243 full-length human cDNAs.</title>
        <authorList>
            <person name="Ota T."/>
            <person name="Suzuki Y."/>
            <person name="Nishikawa T."/>
            <person name="Otsuki T."/>
            <person name="Sugiyama T."/>
            <person name="Irie R."/>
            <person name="Wakamatsu A."/>
            <person name="Hayashi K."/>
            <person name="Sato H."/>
            <person name="Nagai K."/>
            <person name="Kimura K."/>
            <person name="Makita H."/>
            <person name="Sekine M."/>
            <person name="Obayashi M."/>
            <person name="Nishi T."/>
            <person name="Shibahara T."/>
            <person name="Tanaka T."/>
            <person name="Ishii S."/>
            <person name="Yamamoto J."/>
            <person name="Saito K."/>
            <person name="Kawai Y."/>
            <person name="Isono Y."/>
            <person name="Nakamura Y."/>
            <person name="Nagahari K."/>
            <person name="Murakami K."/>
            <person name="Yasuda T."/>
            <person name="Iwayanagi T."/>
            <person name="Wagatsuma M."/>
            <person name="Shiratori A."/>
            <person name="Sudo H."/>
            <person name="Hosoiri T."/>
            <person name="Kaku Y."/>
            <person name="Kodaira H."/>
            <person name="Kondo H."/>
            <person name="Sugawara M."/>
            <person name="Takahashi M."/>
            <person name="Kanda K."/>
            <person name="Yokoi T."/>
            <person name="Furuya T."/>
            <person name="Kikkawa E."/>
            <person name="Omura Y."/>
            <person name="Abe K."/>
            <person name="Kamihara K."/>
            <person name="Katsuta N."/>
            <person name="Sato K."/>
            <person name="Tanikawa M."/>
            <person name="Yamazaki M."/>
            <person name="Ninomiya K."/>
            <person name="Ishibashi T."/>
            <person name="Yamashita H."/>
            <person name="Murakawa K."/>
            <person name="Fujimori K."/>
            <person name="Tanai H."/>
            <person name="Kimata M."/>
            <person name="Watanabe M."/>
            <person name="Hiraoka S."/>
            <person name="Chiba Y."/>
            <person name="Ishida S."/>
            <person name="Ono Y."/>
            <person name="Takiguchi S."/>
            <person name="Watanabe S."/>
            <person name="Yosida M."/>
            <person name="Hotuta T."/>
            <person name="Kusano J."/>
            <person name="Kanehori K."/>
            <person name="Takahashi-Fujii A."/>
            <person name="Hara H."/>
            <person name="Tanase T.-O."/>
            <person name="Nomura Y."/>
            <person name="Togiya S."/>
            <person name="Komai F."/>
            <person name="Hara R."/>
            <person name="Takeuchi K."/>
            <person name="Arita M."/>
            <person name="Imose N."/>
            <person name="Musashino K."/>
            <person name="Yuuki H."/>
            <person name="Oshima A."/>
            <person name="Sasaki N."/>
            <person name="Aotsuka S."/>
            <person name="Yoshikawa Y."/>
            <person name="Matsunawa H."/>
            <person name="Ichihara T."/>
            <person name="Shiohata N."/>
            <person name="Sano S."/>
            <person name="Moriya S."/>
            <person name="Momiyama H."/>
            <person name="Satoh N."/>
            <person name="Takami S."/>
            <person name="Terashima Y."/>
            <person name="Suzuki O."/>
            <person name="Nakagawa S."/>
            <person name="Senoh A."/>
            <person name="Mizoguchi H."/>
            <person name="Goto Y."/>
            <person name="Shimizu F."/>
            <person name="Wakebe H."/>
            <person name="Hishigaki H."/>
            <person name="Watanabe T."/>
            <person name="Sugiyama A."/>
            <person name="Takemoto M."/>
            <person name="Kawakami B."/>
            <person name="Yamazaki M."/>
            <person name="Watanabe K."/>
            <person name="Kumagai A."/>
            <person name="Itakura S."/>
            <person name="Fukuzumi Y."/>
            <person name="Fujimori Y."/>
            <person name="Komiyama M."/>
            <person name="Tashiro H."/>
            <person name="Tanigami A."/>
            <person name="Fujiwara T."/>
            <person name="Ono T."/>
            <person name="Yamada K."/>
            <person name="Fujii Y."/>
            <person name="Ozaki K."/>
            <person name="Hirao M."/>
            <person name="Ohmori Y."/>
            <person name="Kawabata A."/>
            <person name="Hikiji T."/>
            <person name="Kobatake N."/>
            <person name="Inagaki H."/>
            <person name="Ikema Y."/>
            <person name="Okamoto S."/>
            <person name="Okitani R."/>
            <person name="Kawakami T."/>
            <person name="Noguchi S."/>
            <person name="Itoh T."/>
            <person name="Shigeta K."/>
            <person name="Senba T."/>
            <person name="Matsumura K."/>
            <person name="Nakajima Y."/>
            <person name="Mizuno T."/>
            <person name="Morinaga M."/>
            <person name="Sasaki M."/>
            <person name="Togashi T."/>
            <person name="Oyama M."/>
            <person name="Hata H."/>
            <person name="Watanabe M."/>
            <person name="Komatsu T."/>
            <person name="Mizushima-Sugano J."/>
            <person name="Satoh T."/>
            <person name="Shirai Y."/>
            <person name="Takahashi Y."/>
            <person name="Nakagawa K."/>
            <person name="Okumura K."/>
            <person name="Nagase T."/>
            <person name="Nomura N."/>
            <person name="Kikuchi H."/>
            <person name="Masuho Y."/>
            <person name="Yamashita R."/>
            <person name="Nakai K."/>
            <person name="Yada T."/>
            <person name="Nakamura Y."/>
            <person name="Ohara O."/>
            <person name="Isogai T."/>
            <person name="Sugano S."/>
        </authorList>
    </citation>
    <scope>NUCLEOTIDE SEQUENCE [LARGE SCALE MRNA]</scope>
    <source>
        <tissue>Brain</tissue>
    </source>
</reference>
<reference key="5">
    <citation type="submission" date="2004-05" db="EMBL/GenBank/DDBJ databases">
        <title>Cloning of human full open reading frames in Gateway(TM) system entry vector (pDONR201).</title>
        <authorList>
            <person name="Ebert L."/>
            <person name="Schick M."/>
            <person name="Neubert P."/>
            <person name="Schatten R."/>
            <person name="Henze S."/>
            <person name="Korn B."/>
        </authorList>
    </citation>
    <scope>NUCLEOTIDE SEQUENCE [LARGE SCALE MRNA]</scope>
</reference>
<reference key="6">
    <citation type="submission" date="2005-09" db="EMBL/GenBank/DDBJ databases">
        <authorList>
            <person name="Mural R.J."/>
            <person name="Istrail S."/>
            <person name="Sutton G."/>
            <person name="Florea L."/>
            <person name="Halpern A.L."/>
            <person name="Mobarry C.M."/>
            <person name="Lippert R."/>
            <person name="Walenz B."/>
            <person name="Shatkay H."/>
            <person name="Dew I."/>
            <person name="Miller J.R."/>
            <person name="Flanigan M.J."/>
            <person name="Edwards N.J."/>
            <person name="Bolanos R."/>
            <person name="Fasulo D."/>
            <person name="Halldorsson B.V."/>
            <person name="Hannenhalli S."/>
            <person name="Turner R."/>
            <person name="Yooseph S."/>
            <person name="Lu F."/>
            <person name="Nusskern D.R."/>
            <person name="Shue B.C."/>
            <person name="Zheng X.H."/>
            <person name="Zhong F."/>
            <person name="Delcher A.L."/>
            <person name="Huson D.H."/>
            <person name="Kravitz S.A."/>
            <person name="Mouchard L."/>
            <person name="Reinert K."/>
            <person name="Remington K.A."/>
            <person name="Clark A.G."/>
            <person name="Waterman M.S."/>
            <person name="Eichler E.E."/>
            <person name="Adams M.D."/>
            <person name="Hunkapiller M.W."/>
            <person name="Myers E.W."/>
            <person name="Venter J.C."/>
        </authorList>
    </citation>
    <scope>NUCLEOTIDE SEQUENCE [LARGE SCALE GENOMIC DNA]</scope>
</reference>
<reference key="7">
    <citation type="journal article" date="2004" name="Genome Res.">
        <title>The status, quality, and expansion of the NIH full-length cDNA project: the Mammalian Gene Collection (MGC).</title>
        <authorList>
            <consortium name="The MGC Project Team"/>
        </authorList>
    </citation>
    <scope>NUCLEOTIDE SEQUENCE [LARGE SCALE MRNA]</scope>
    <source>
        <tissue>Colon</tissue>
        <tissue>Lung</tissue>
        <tissue>Pancreas</tissue>
        <tissue>Placenta</tissue>
    </source>
</reference>
<reference key="8">
    <citation type="journal article" date="1988" name="FEBS Lett.">
        <title>The primary structure of human platelet profilin: reinvestigation of the calf spleen profilin sequence.</title>
        <authorList>
            <person name="Ampe C."/>
            <person name="Markey F."/>
            <person name="Lindberg U."/>
            <person name="Vandekerckhove J."/>
        </authorList>
    </citation>
    <scope>PROTEIN SEQUENCE OF 2-140</scope>
    <scope>ACETYLATION AT ALA-2</scope>
</reference>
<reference key="9">
    <citation type="journal article" date="1995" name="Eur. J. Biochem.">
        <title>Distinct biochemical characteristics of the two human profilin isoforms.</title>
        <authorList>
            <person name="Gieselmann R."/>
            <person name="Kwiatkowski D.J."/>
            <person name="Janmey P.A."/>
            <person name="Witke W."/>
        </authorList>
    </citation>
    <scope>CHARACTERIZATION</scope>
</reference>
<reference key="10">
    <citation type="journal article" date="1999" name="Proc. Natl. Acad. Sci. U.S.A.">
        <title>A heterozygous mutation of beta-actin associated with neutrophil dysfunction and recurrent infection.</title>
        <authorList>
            <person name="Nunoi H."/>
            <person name="Yamazaki T."/>
            <person name="Tsuchiya H."/>
            <person name="Kato S."/>
            <person name="Malech H.L."/>
            <person name="Matsuda I."/>
            <person name="Kanegasaki S."/>
        </authorList>
    </citation>
    <scope>INTERACTION WITH ACTB</scope>
</reference>
<reference key="11">
    <citation type="journal article" date="2003" name="EMBO J.">
        <title>Exportin 6: a novel nuclear export receptor that is specific for profilin.actin complexes.</title>
        <authorList>
            <person name="Stueven T."/>
            <person name="Hartmann E."/>
            <person name="Goerlich D."/>
        </authorList>
    </citation>
    <scope>IDENTIFICATION IN A COMPLEX WITH RAN; ACTB AND XPO6</scope>
</reference>
<reference key="12">
    <citation type="journal article" date="2003" name="Nature">
        <title>Proteomic characterization of the human centrosome by protein correlation profiling.</title>
        <authorList>
            <person name="Andersen J.S."/>
            <person name="Wilkinson C.J."/>
            <person name="Mayor T."/>
            <person name="Mortensen P."/>
            <person name="Nigg E.A."/>
            <person name="Mann M."/>
        </authorList>
    </citation>
    <scope>IDENTIFICATION BY MASS SPECTROMETRY</scope>
    <source>
        <tissue>Lymphoblast</tissue>
    </source>
</reference>
<reference key="13">
    <citation type="journal article" date="2005" name="Nat. Biotechnol.">
        <title>Immunoaffinity profiling of tyrosine phosphorylation in cancer cells.</title>
        <authorList>
            <person name="Rush J."/>
            <person name="Moritz A."/>
            <person name="Lee K.A."/>
            <person name="Guo A."/>
            <person name="Goss V.L."/>
            <person name="Spek E.J."/>
            <person name="Zhang H."/>
            <person name="Zha X.-M."/>
            <person name="Polakiewicz R.D."/>
            <person name="Comb M.J."/>
        </authorList>
    </citation>
    <scope>PHOSPHORYLATION [LARGE SCALE ANALYSIS] AT TYR-129</scope>
    <scope>IDENTIFICATION BY MASS SPECTROMETRY [LARGE SCALE ANALYSIS]</scope>
</reference>
<reference key="14">
    <citation type="journal article" date="2008" name="Mol. Cell. Biol.">
        <title>Phosphorylation of profilin by ROCK1 regulates polyglutamine aggregation.</title>
        <authorList>
            <person name="Shao J."/>
            <person name="Welch W.J."/>
            <person name="Diprospero N.A."/>
            <person name="Diamond M.I."/>
        </authorList>
    </citation>
    <scope>FUNCTION</scope>
    <scope>INTERACTION WITH HTT</scope>
    <scope>PHOSPHORYLATION AT SER-138</scope>
</reference>
<reference key="15">
    <citation type="journal article" date="2009" name="Anal. Chem.">
        <title>Lys-N and trypsin cover complementary parts of the phosphoproteome in a refined SCX-based approach.</title>
        <authorList>
            <person name="Gauci S."/>
            <person name="Helbig A.O."/>
            <person name="Slijper M."/>
            <person name="Krijgsveld J."/>
            <person name="Heck A.J."/>
            <person name="Mohammed S."/>
        </authorList>
    </citation>
    <scope>ACETYLATION [LARGE SCALE ANALYSIS] AT ALA-2</scope>
    <scope>CLEAVAGE OF INITIATOR METHIONINE [LARGE SCALE ANALYSIS]</scope>
    <scope>IDENTIFICATION BY MASS SPECTROMETRY [LARGE SCALE ANALYSIS]</scope>
</reference>
<reference key="16">
    <citation type="journal article" date="2009" name="Sci. Signal.">
        <title>Quantitative phosphoproteomic analysis of T cell receptor signaling reveals system-wide modulation of protein-protein interactions.</title>
        <authorList>
            <person name="Mayya V."/>
            <person name="Lundgren D.H."/>
            <person name="Hwang S.-I."/>
            <person name="Rezaul K."/>
            <person name="Wu L."/>
            <person name="Eng J.K."/>
            <person name="Rodionov V."/>
            <person name="Han D.K."/>
        </authorList>
    </citation>
    <scope>PHOSPHORYLATION [LARGE SCALE ANALYSIS] AT SER-85</scope>
    <scope>IDENTIFICATION BY MASS SPECTROMETRY [LARGE SCALE ANALYSIS]</scope>
    <source>
        <tissue>Leukemic T-cell</tissue>
    </source>
</reference>
<reference key="17">
    <citation type="journal article" date="2009" name="Science">
        <title>Lysine acetylation targets protein complexes and co-regulates major cellular functions.</title>
        <authorList>
            <person name="Choudhary C."/>
            <person name="Kumar C."/>
            <person name="Gnad F."/>
            <person name="Nielsen M.L."/>
            <person name="Rehman M."/>
            <person name="Walther T.C."/>
            <person name="Olsen J.V."/>
            <person name="Mann M."/>
        </authorList>
    </citation>
    <scope>ACETYLATION [LARGE SCALE ANALYSIS] AT LYS-105 AND LYS-108</scope>
    <scope>IDENTIFICATION BY MASS SPECTROMETRY [LARGE SCALE ANALYSIS]</scope>
</reference>
<reference key="18">
    <citation type="journal article" date="2011" name="BMC Syst. Biol.">
        <title>Initial characterization of the human central proteome.</title>
        <authorList>
            <person name="Burkard T.R."/>
            <person name="Planyavsky M."/>
            <person name="Kaupe I."/>
            <person name="Breitwieser F.P."/>
            <person name="Buerckstuemmer T."/>
            <person name="Bennett K.L."/>
            <person name="Superti-Furga G."/>
            <person name="Colinge J."/>
        </authorList>
    </citation>
    <scope>IDENTIFICATION BY MASS SPECTROMETRY [LARGE SCALE ANALYSIS]</scope>
</reference>
<reference key="19">
    <citation type="journal article" date="2012" name="J. Proteome Res.">
        <title>Resveratrol-induced changes of the human adipocyte secretion profile.</title>
        <authorList>
            <person name="Rosenow A."/>
            <person name="Noben J.P."/>
            <person name="Jocken J."/>
            <person name="Kallendrusch S."/>
            <person name="Fischer-Posovszky P."/>
            <person name="Mariman E.C."/>
            <person name="Renes J."/>
        </authorList>
    </citation>
    <scope>IDENTIFICATION BY MASS SPECTROMETRY [LARGE SCALE ANALYSIS]</scope>
</reference>
<reference key="20">
    <citation type="journal article" date="2012" name="Mol. Cell. Proteomics">
        <title>Comparative large-scale characterisation of plant vs. mammal proteins reveals similar and idiosyncratic N-alpha acetylation features.</title>
        <authorList>
            <person name="Bienvenut W.V."/>
            <person name="Sumpton D."/>
            <person name="Martinez A."/>
            <person name="Lilla S."/>
            <person name="Espagne C."/>
            <person name="Meinnel T."/>
            <person name="Giglione C."/>
        </authorList>
    </citation>
    <scope>ACETYLATION [LARGE SCALE ANALYSIS] AT ALA-2</scope>
    <scope>CLEAVAGE OF INITIATOR METHIONINE [LARGE SCALE ANALYSIS]</scope>
    <scope>IDENTIFICATION BY MASS SPECTROMETRY [LARGE SCALE ANALYSIS]</scope>
</reference>
<reference key="21">
    <citation type="journal article" date="2013" name="J. Proteome Res.">
        <title>Toward a comprehensive characterization of a human cancer cell phosphoproteome.</title>
        <authorList>
            <person name="Zhou H."/>
            <person name="Di Palma S."/>
            <person name="Preisinger C."/>
            <person name="Peng M."/>
            <person name="Polat A.N."/>
            <person name="Heck A.J."/>
            <person name="Mohammed S."/>
        </authorList>
    </citation>
    <scope>PHOSPHORYLATION [LARGE SCALE ANALYSIS] AT SER-57</scope>
    <scope>IDENTIFICATION BY MASS SPECTROMETRY [LARGE SCALE ANALYSIS]</scope>
    <source>
        <tissue>Erythroleukemia</tissue>
    </source>
</reference>
<reference key="22">
    <citation type="journal article" date="2014" name="J. Proteomics">
        <title>An enzyme assisted RP-RPLC approach for in-depth analysis of human liver phosphoproteome.</title>
        <authorList>
            <person name="Bian Y."/>
            <person name="Song C."/>
            <person name="Cheng K."/>
            <person name="Dong M."/>
            <person name="Wang F."/>
            <person name="Huang J."/>
            <person name="Sun D."/>
            <person name="Wang L."/>
            <person name="Ye M."/>
            <person name="Zou H."/>
        </authorList>
    </citation>
    <scope>IDENTIFICATION BY MASS SPECTROMETRY [LARGE SCALE ANALYSIS]</scope>
    <source>
        <tissue>Liver</tissue>
    </source>
</reference>
<reference key="23">
    <citation type="journal article" date="2015" name="Proteomics">
        <title>N-terminome analysis of the human mitochondrial proteome.</title>
        <authorList>
            <person name="Vaca Jacome A.S."/>
            <person name="Rabilloud T."/>
            <person name="Schaeffer-Reiss C."/>
            <person name="Rompais M."/>
            <person name="Ayoub D."/>
            <person name="Lane L."/>
            <person name="Bairoch A."/>
            <person name="Van Dorsselaer A."/>
            <person name="Carapito C."/>
        </authorList>
    </citation>
    <scope>ACETYLATION [LARGE SCALE ANALYSIS] AT ALA-2</scope>
    <scope>CLEAVAGE OF INITIATOR METHIONINE [LARGE SCALE ANALYSIS]</scope>
    <scope>IDENTIFICATION BY MASS SPECTROMETRY [LARGE SCALE ANALYSIS]</scope>
</reference>
<reference key="24">
    <citation type="journal article" date="2017" name="Nat. Struct. Mol. Biol.">
        <title>Site-specific mapping of the human SUMO proteome reveals co-modification with phosphorylation.</title>
        <authorList>
            <person name="Hendriks I.A."/>
            <person name="Lyon D."/>
            <person name="Young C."/>
            <person name="Jensen L.J."/>
            <person name="Vertegaal A.C."/>
            <person name="Nielsen M.L."/>
        </authorList>
    </citation>
    <scope>SUMOYLATION [LARGE SCALE ANALYSIS] AT LYS-54</scope>
    <scope>IDENTIFICATION BY MASS SPECTROMETRY [LARGE SCALE ANALYSIS]</scope>
</reference>
<reference key="25">
    <citation type="journal article" date="2021" name="Oncogene">
        <title>Adaptor SH3BGRL promotes breast cancer metastasis through PFN1 degradation by translational STUB1 upregulation.</title>
        <authorList>
            <person name="Zhang S."/>
            <person name="Guo X."/>
            <person name="Liu X."/>
            <person name="Zhong Z."/>
            <person name="Yang S."/>
            <person name="Wang H."/>
        </authorList>
    </citation>
    <scope>INTERACTION WITH SH3BGRL</scope>
</reference>
<reference key="26">
    <citation type="journal article" date="2022" name="Science">
        <title>Actin maturation requires the ACTMAP/C19orf54 protease.</title>
        <authorList>
            <person name="Haahr P."/>
            <person name="Galli R.A."/>
            <person name="van den Hengel L.G."/>
            <person name="Bleijerveld O.B."/>
            <person name="Kazokaite-Adomaitiene J."/>
            <person name="Song J.Y."/>
            <person name="Kroese L.J."/>
            <person name="Krimpenfort P."/>
            <person name="Baltissen M.P."/>
            <person name="Vermeulen M."/>
            <person name="Ottenheijm C.A.C."/>
            <person name="Brummelkamp T.R."/>
        </authorList>
    </citation>
    <scope>INTERACTION WITH ACTMAP</scope>
</reference>
<reference key="27">
    <citation type="journal article" date="1993" name="Biochemistry">
        <title>Characterization of the three-dimensional solution structure of human profilin: 1H, 13C, and 15N NMR assignments and global folding pattern.</title>
        <authorList>
            <person name="Metzler W.J."/>
            <person name="Constantine K.L."/>
            <person name="Friedrichs M.S."/>
            <person name="Bell A.J."/>
            <person name="Ernst E.G."/>
            <person name="Lavoie T.B."/>
            <person name="Mueller L."/>
        </authorList>
    </citation>
    <scope>STRUCTURE BY NMR</scope>
</reference>
<reference key="28">
    <citation type="submission" date="1996-04" db="PDB data bank">
        <authorList>
            <person name="Fedorov A.A."/>
            <person name="Pollard T.D."/>
            <person name="Almo S.C."/>
        </authorList>
    </citation>
    <scope>X-RAY CRYSTALLOGRAPHY (2.3 ANGSTROMS)</scope>
</reference>
<reference key="29">
    <citation type="journal article" date="1997" name="Nat. Struct. Biol.">
        <title>Structure of the profilin-poly-L-proline complex involved in morphogenesis and cytoskeletal regulation.</title>
        <authorList>
            <person name="Mahoney N.M."/>
            <person name="Janmey P.A."/>
            <person name="Almo S.C."/>
        </authorList>
    </citation>
    <scope>X-RAY CRYSTALLOGRAPHY (2.2 ANGSTROMS) OF COMPLEX WITH POLY-PRO</scope>
</reference>
<reference key="30">
    <citation type="journal article" date="1999" name="Nat. Struct. Biol.">
        <title>Profilin binds proline-rich ligands in two distinct amide backbone orientations.</title>
        <authorList>
            <person name="Mahoney N.M."/>
            <person name="Rozwarski D.A."/>
            <person name="Fedorov E."/>
            <person name="Fedorov A.A."/>
            <person name="Almo S.C."/>
        </authorList>
    </citation>
    <scope>X-RAY CRYSTALLOGRAPHY (2.3 ANGSTROMS) OF COMPLEX WITH POLY-PRO</scope>
</reference>
<reference key="31">
    <citation type="journal article" date="2007" name="EMBO J.">
        <title>Structural basis for the recruitment of profilin-actin complexes during filament elongation by Ena/VASP.</title>
        <authorList>
            <person name="Ferron F."/>
            <person name="Rebowski G."/>
            <person name="Lee S.H."/>
            <person name="Dominguez R."/>
        </authorList>
    </citation>
    <scope>X-RAY CRYSTALLOGRAPHY (1.5 ANGSTROMS) OF 2-140 IN COMPLEXES WITH VASP AND MONOMERIC ACTIN</scope>
    <scope>INTERACTION WITH VASP</scope>
</reference>
<reference key="32">
    <citation type="journal article" date="2008" name="Proc. Natl. Acad. Sci. U.S.A.">
        <title>Modulation of actin structure and function by phosphorylation of Tyr-53 and profilin binding.</title>
        <authorList>
            <person name="Baek K."/>
            <person name="Liu X."/>
            <person name="Ferron F."/>
            <person name="Shu S."/>
            <person name="Korn E.D."/>
            <person name="Dominguez R."/>
        </authorList>
    </citation>
    <scope>X-RAY CRYSTALLOGRAPHY (2.3 ANGSTROMS) OF 2-140 IN COMPLEX WITH VASP AND ACTIN</scope>
</reference>
<reference key="33">
    <citation type="journal article" date="2012" name="Nature">
        <title>Mutations in the profilin 1 gene cause familial amyotrophic lateral sclerosis.</title>
        <authorList>
            <person name="Wu C.H."/>
            <person name="Fallini C."/>
            <person name="Ticozzi N."/>
            <person name="Keagle P.J."/>
            <person name="Sapp P.C."/>
            <person name="Piotrowska K."/>
            <person name="Lowe P."/>
            <person name="Koppers M."/>
            <person name="McKenna-Yasek D."/>
            <person name="Baron D.M."/>
            <person name="Kost J.E."/>
            <person name="Gonzalez-Perez P."/>
            <person name="Fox A.D."/>
            <person name="Adams J."/>
            <person name="Taroni F."/>
            <person name="Tiloca C."/>
            <person name="Leclerc A.L."/>
            <person name="Chafe S.C."/>
            <person name="Mangroo D."/>
            <person name="Moore M.J."/>
            <person name="Zitzewitz J.A."/>
            <person name="Xu Z.S."/>
            <person name="van den Berg L.H."/>
            <person name="Glass J.D."/>
            <person name="Siciliano G."/>
            <person name="Cirulli E.T."/>
            <person name="Goldstein D.B."/>
            <person name="Salachas F."/>
            <person name="Meininger V."/>
            <person name="Rossoll W."/>
            <person name="Ratti A."/>
            <person name="Gellera C."/>
            <person name="Bosco D.A."/>
            <person name="Bassell G.J."/>
            <person name="Silani V."/>
            <person name="Drory V.E."/>
            <person name="Brown R.H. Jr."/>
            <person name="Landers J.E."/>
        </authorList>
    </citation>
    <scope>VARIANTS ALS18 GLY-71; THR-114; GLY-117 AND VAL-118</scope>
    <scope>CHARACTERIZATION OF VARIANTS ALS18 GLY-71; THR-114; GLY-117 AND VAL-118</scope>
</reference>
<proteinExistence type="evidence at protein level"/>
<comment type="function">
    <text evidence="5">Binds to actin and affects the structure of the cytoskeleton. At high concentrations, profilin prevents the polymerization of actin, whereas it enhances it at low concentrations. By binding to PIP2, it inhibits the formation of IP3 and DG. Inhibits androgen receptor (AR) and HTT aggregation and binding of G-actin is essential for its inhibition of AR.</text>
</comment>
<comment type="subunit">
    <text evidence="2 3 4 5 6 10 11">Found in a complex with XPO6, Ran, ACTB and PFN1 (PubMed:14592989). Interacts with ACTB (PubMed:10411937). Interacts with VASP (PubMed:17914456, PubMed:18689676). Interacts with HTT (PubMed:18573880). Interacts with SH3BGRL (PubMed:34331014). Occurs in many kinds of cells as a complex with monomeric actin in a 1:1 ratio (PubMed:17914456, PubMed:18689676). Interacts with ACTMAP (PubMed:36173861).</text>
</comment>
<comment type="interaction">
    <interactant intactId="EBI-713780">
        <id>P07737</id>
    </interactant>
    <interactant intactId="EBI-353944">
        <id>P60709</id>
        <label>ACTB</label>
    </interactant>
    <organismsDiffer>false</organismsDiffer>
    <experiments>3</experiments>
</comment>
<comment type="interaction">
    <interactant intactId="EBI-713780">
        <id>P07737</id>
    </interactant>
    <interactant intactId="EBI-748201">
        <id>P50552</id>
        <label>VASP</label>
    </interactant>
    <organismsDiffer>false</organismsDiffer>
    <experiments>2</experiments>
</comment>
<comment type="interaction">
    <interactant intactId="EBI-713780">
        <id>P07737</id>
    </interactant>
    <interactant intactId="EBI-1548747">
        <id>Q92558</id>
        <label>WASF1</label>
    </interactant>
    <organismsDiffer>false</organismsDiffer>
    <experiments>3</experiments>
</comment>
<comment type="interaction">
    <interactant intactId="EBI-713780">
        <id>P07737</id>
    </interactant>
    <interactant intactId="EBI-7195234">
        <id>P07830</id>
        <label>act21</label>
    </interactant>
    <organismsDiffer>true</organismsDiffer>
    <experiments>3</experiments>
</comment>
<comment type="interaction">
    <interactant intactId="EBI-713780">
        <id>P07737</id>
    </interactant>
    <interactant intactId="EBI-367540">
        <id>P68135</id>
        <label>ACTA1</label>
    </interactant>
    <organismsDiffer>true</organismsDiffer>
    <experiments>2</experiments>
</comment>
<comment type="interaction">
    <interactant intactId="EBI-713780">
        <id>P07737</id>
    </interactant>
    <interactant intactId="EBI-6142604">
        <id>O08816</id>
        <label>Wasl</label>
    </interactant>
    <organismsDiffer>true</organismsDiffer>
    <experiments>4</experiments>
</comment>
<comment type="subcellular location">
    <subcellularLocation>
        <location>Cytoplasm</location>
        <location>Cytoskeleton</location>
    </subcellularLocation>
</comment>
<comment type="tissue specificity">
    <text evidence="7">Expressed in epididymis (at protein level).</text>
</comment>
<comment type="PTM">
    <text evidence="5">Phosphorylation at Ser-138 reduces its affinity for G-actin and blocks its interaction with HTT, reducing its ability to inhibit androgen receptor (AR) and HTT aggregation.</text>
</comment>
<comment type="disease" evidence="8">
    <disease id="DI-03520">
        <name>Amyotrophic lateral sclerosis 18</name>
        <acronym>ALS18</acronym>
        <description>A neurodegenerative disorder affecting upper motor neurons in the brain and lower motor neurons in the brain stem and spinal cord, resulting in fatal paralysis. Sensory abnormalities are absent. The pathologic hallmarks of the disease include pallor of the corticospinal tract due to loss of motor neurons, presence of ubiquitin-positive inclusions within surviving motor neurons, and deposition of pathologic aggregates. The etiology of amyotrophic lateral sclerosis is likely to be multifactorial, involving both genetic and environmental factors. The disease is inherited in 5-10% of the cases.</description>
        <dbReference type="MIM" id="614808"/>
    </disease>
    <text>The disease is caused by variants affecting the gene represented in this entry.</text>
</comment>
<comment type="similarity">
    <text evidence="12">Belongs to the profilin family.</text>
</comment>
<accession>P07737</accession>
<accession>Q53Y44</accession>